<evidence type="ECO:0000255" key="1">
    <source>
        <dbReference type="HAMAP-Rule" id="MF_00137"/>
    </source>
</evidence>
<protein>
    <recommendedName>
        <fullName evidence="1">Phosphoribosylaminoimidazole-succinocarboxamide synthase</fullName>
        <ecNumber evidence="1">6.3.2.6</ecNumber>
    </recommendedName>
    <alternativeName>
        <fullName evidence="1">SAICAR synthetase</fullName>
    </alternativeName>
</protein>
<gene>
    <name evidence="1" type="primary">purC</name>
    <name type="ordered locus">YPTS_2887</name>
</gene>
<organism>
    <name type="scientific">Yersinia pseudotuberculosis serotype IB (strain PB1/+)</name>
    <dbReference type="NCBI Taxonomy" id="502801"/>
    <lineage>
        <taxon>Bacteria</taxon>
        <taxon>Pseudomonadati</taxon>
        <taxon>Pseudomonadota</taxon>
        <taxon>Gammaproteobacteria</taxon>
        <taxon>Enterobacterales</taxon>
        <taxon>Yersiniaceae</taxon>
        <taxon>Yersinia</taxon>
    </lineage>
</organism>
<reference key="1">
    <citation type="submission" date="2008-04" db="EMBL/GenBank/DDBJ databases">
        <title>Complete sequence of Yersinia pseudotuberculosis PB1/+.</title>
        <authorList>
            <person name="Copeland A."/>
            <person name="Lucas S."/>
            <person name="Lapidus A."/>
            <person name="Glavina del Rio T."/>
            <person name="Dalin E."/>
            <person name="Tice H."/>
            <person name="Bruce D."/>
            <person name="Goodwin L."/>
            <person name="Pitluck S."/>
            <person name="Munk A.C."/>
            <person name="Brettin T."/>
            <person name="Detter J.C."/>
            <person name="Han C."/>
            <person name="Tapia R."/>
            <person name="Schmutz J."/>
            <person name="Larimer F."/>
            <person name="Land M."/>
            <person name="Hauser L."/>
            <person name="Challacombe J.F."/>
            <person name="Green L."/>
            <person name="Lindler L.E."/>
            <person name="Nikolich M.P."/>
            <person name="Richardson P."/>
        </authorList>
    </citation>
    <scope>NUCLEOTIDE SEQUENCE [LARGE SCALE GENOMIC DNA]</scope>
    <source>
        <strain>PB1/+</strain>
    </source>
</reference>
<comment type="catalytic activity">
    <reaction evidence="1">
        <text>5-amino-1-(5-phospho-D-ribosyl)imidazole-4-carboxylate + L-aspartate + ATP = (2S)-2-[5-amino-1-(5-phospho-beta-D-ribosyl)imidazole-4-carboxamido]succinate + ADP + phosphate + 2 H(+)</text>
        <dbReference type="Rhea" id="RHEA:22628"/>
        <dbReference type="ChEBI" id="CHEBI:15378"/>
        <dbReference type="ChEBI" id="CHEBI:29991"/>
        <dbReference type="ChEBI" id="CHEBI:30616"/>
        <dbReference type="ChEBI" id="CHEBI:43474"/>
        <dbReference type="ChEBI" id="CHEBI:58443"/>
        <dbReference type="ChEBI" id="CHEBI:77657"/>
        <dbReference type="ChEBI" id="CHEBI:456216"/>
        <dbReference type="EC" id="6.3.2.6"/>
    </reaction>
</comment>
<comment type="pathway">
    <text evidence="1">Purine metabolism; IMP biosynthesis via de novo pathway; 5-amino-1-(5-phospho-D-ribosyl)imidazole-4-carboxamide from 5-amino-1-(5-phospho-D-ribosyl)imidazole-4-carboxylate: step 1/2.</text>
</comment>
<comment type="similarity">
    <text evidence="1">Belongs to the SAICAR synthetase family.</text>
</comment>
<proteinExistence type="inferred from homology"/>
<accession>B2K993</accession>
<feature type="chain" id="PRO_1000096031" description="Phosphoribosylaminoimidazole-succinocarboxamide synthase">
    <location>
        <begin position="1"/>
        <end position="237"/>
    </location>
</feature>
<sequence>MQKLAELYRGKAKTVYTTENPDLLVLEFRNDTSALDGQRIEQFDRKGMVNNKFNHFIMTKLEEAGIPTQMERLLSDTEVLVKKLEMIPVECVIRNRAAGSLVKRLGIEEGLSLNPPLFDLFLKNDAMHDPMVNESYCKTFGWATEAQLARMKELSYLANDVLSKLFDDAGLILVDFKLEFGLFNGEVVLGDEFSPDGSRLWDKKTLNKMDKDRYRQSLGGLIEAYEEVAHRIGVKLD</sequence>
<keyword id="KW-0067">ATP-binding</keyword>
<keyword id="KW-0436">Ligase</keyword>
<keyword id="KW-0547">Nucleotide-binding</keyword>
<keyword id="KW-0658">Purine biosynthesis</keyword>
<dbReference type="EC" id="6.3.2.6" evidence="1"/>
<dbReference type="EMBL" id="CP001048">
    <property type="protein sequence ID" value="ACC89844.1"/>
    <property type="molecule type" value="Genomic_DNA"/>
</dbReference>
<dbReference type="RefSeq" id="WP_002208555.1">
    <property type="nucleotide sequence ID" value="NZ_CP009780.1"/>
</dbReference>
<dbReference type="SMR" id="B2K993"/>
<dbReference type="GeneID" id="57975643"/>
<dbReference type="KEGG" id="ypb:YPTS_2887"/>
<dbReference type="PATRIC" id="fig|502801.10.peg.2315"/>
<dbReference type="UniPathway" id="UPA00074">
    <property type="reaction ID" value="UER00131"/>
</dbReference>
<dbReference type="GO" id="GO:0005829">
    <property type="term" value="C:cytosol"/>
    <property type="evidence" value="ECO:0007669"/>
    <property type="project" value="TreeGrafter"/>
</dbReference>
<dbReference type="GO" id="GO:0005524">
    <property type="term" value="F:ATP binding"/>
    <property type="evidence" value="ECO:0007669"/>
    <property type="project" value="UniProtKB-KW"/>
</dbReference>
<dbReference type="GO" id="GO:0004639">
    <property type="term" value="F:phosphoribosylaminoimidazolesuccinocarboxamide synthase activity"/>
    <property type="evidence" value="ECO:0007669"/>
    <property type="project" value="UniProtKB-UniRule"/>
</dbReference>
<dbReference type="GO" id="GO:0006189">
    <property type="term" value="P:'de novo' IMP biosynthetic process"/>
    <property type="evidence" value="ECO:0007669"/>
    <property type="project" value="UniProtKB-UniRule"/>
</dbReference>
<dbReference type="GO" id="GO:0009236">
    <property type="term" value="P:cobalamin biosynthetic process"/>
    <property type="evidence" value="ECO:0007669"/>
    <property type="project" value="InterPro"/>
</dbReference>
<dbReference type="CDD" id="cd01415">
    <property type="entry name" value="SAICAR_synt_PurC"/>
    <property type="match status" value="1"/>
</dbReference>
<dbReference type="FunFam" id="3.30.200.20:FF:000086">
    <property type="entry name" value="Phosphoribosylaminoimidazole-succinocarboxamide synthase"/>
    <property type="match status" value="1"/>
</dbReference>
<dbReference type="FunFam" id="3.30.470.20:FF:000006">
    <property type="entry name" value="Phosphoribosylaminoimidazole-succinocarboxamide synthase"/>
    <property type="match status" value="1"/>
</dbReference>
<dbReference type="Gene3D" id="3.30.470.20">
    <property type="entry name" value="ATP-grasp fold, B domain"/>
    <property type="match status" value="1"/>
</dbReference>
<dbReference type="Gene3D" id="3.30.200.20">
    <property type="entry name" value="Phosphorylase Kinase, domain 1"/>
    <property type="match status" value="1"/>
</dbReference>
<dbReference type="HAMAP" id="MF_00137">
    <property type="entry name" value="SAICAR_synth"/>
    <property type="match status" value="1"/>
</dbReference>
<dbReference type="InterPro" id="IPR028923">
    <property type="entry name" value="SAICAR_synt/ADE2_N"/>
</dbReference>
<dbReference type="InterPro" id="IPR033934">
    <property type="entry name" value="SAICAR_synt_PurC"/>
</dbReference>
<dbReference type="InterPro" id="IPR001636">
    <property type="entry name" value="SAICAR_synth"/>
</dbReference>
<dbReference type="InterPro" id="IPR050089">
    <property type="entry name" value="SAICAR_synthetase"/>
</dbReference>
<dbReference type="InterPro" id="IPR018236">
    <property type="entry name" value="SAICAR_synthetase_CS"/>
</dbReference>
<dbReference type="NCBIfam" id="TIGR00081">
    <property type="entry name" value="purC"/>
    <property type="match status" value="1"/>
</dbReference>
<dbReference type="PANTHER" id="PTHR43599">
    <property type="entry name" value="MULTIFUNCTIONAL PROTEIN ADE2"/>
    <property type="match status" value="1"/>
</dbReference>
<dbReference type="PANTHER" id="PTHR43599:SF3">
    <property type="entry name" value="SI:DKEY-6E2.2"/>
    <property type="match status" value="1"/>
</dbReference>
<dbReference type="Pfam" id="PF01259">
    <property type="entry name" value="SAICAR_synt"/>
    <property type="match status" value="1"/>
</dbReference>
<dbReference type="SUPFAM" id="SSF56104">
    <property type="entry name" value="SAICAR synthase-like"/>
    <property type="match status" value="1"/>
</dbReference>
<dbReference type="PROSITE" id="PS01057">
    <property type="entry name" value="SAICAR_SYNTHETASE_1"/>
    <property type="match status" value="1"/>
</dbReference>
<dbReference type="PROSITE" id="PS01058">
    <property type="entry name" value="SAICAR_SYNTHETASE_2"/>
    <property type="match status" value="1"/>
</dbReference>
<name>PUR7_YERPB</name>